<evidence type="ECO:0000250" key="1">
    <source>
        <dbReference type="UniProtKB" id="P33644"/>
    </source>
</evidence>
<evidence type="ECO:0000250" key="2">
    <source>
        <dbReference type="UniProtKB" id="P84138"/>
    </source>
</evidence>
<evidence type="ECO:0000250" key="3">
    <source>
        <dbReference type="UniProtKB" id="Q1EIR0"/>
    </source>
</evidence>
<evidence type="ECO:0000305" key="4"/>
<accession>Q9ZHA4</accession>
<reference key="1">
    <citation type="journal article" date="1998" name="Microbiology">
        <title>Unconventional organization of the division and cell wall gene cluster of Streptococcus pneumoniae.</title>
        <authorList>
            <person name="Massidda O."/>
            <person name="Anderluzzi D."/>
            <person name="Friedli L."/>
            <person name="Feger G."/>
        </authorList>
    </citation>
    <scope>NUCLEOTIDE SEQUENCE [GENOMIC DNA]</scope>
    <source>
        <strain>ATCC 14154 / Rose</strain>
    </source>
</reference>
<sequence>MNDNFKKQPHHLIYEELLQQGITLGITTRGDGLSDYPKNAFNMARYIDDCPYNITQHQLQLAEEIAFDRKNWVFPIQTHENKVACITKDDIGTNIDTLTDALHGIDAMYTYDSNVLLTMCYADCVPVYFYSTKHHFIALAHAGWRGTYTEIVKEVLKHVNFDLKDLHVVIGPSTSSSYEINDDIKNKFETLPIDSANYIETRGRDRHGIDLKKANAALLNNYGVPKENIYTTAYATSEHLELFFSYRLEKGQTGRMLAFIGQQ</sequence>
<keyword id="KW-0186">Copper</keyword>
<keyword id="KW-0378">Hydrolase</keyword>
<keyword id="KW-0479">Metal-binding</keyword>
<keyword id="KW-0560">Oxidoreductase</keyword>
<keyword id="KW-0808">Transferase</keyword>
<keyword id="KW-0862">Zinc</keyword>
<gene>
    <name type="primary">ylmD</name>
</gene>
<feature type="chain" id="PRO_0000163177" description="Purine nucleoside phosphorylase YlmD">
    <location>
        <begin position="1"/>
        <end position="263"/>
    </location>
</feature>
<feature type="binding site" evidence="2">
    <location>
        <position position="79"/>
    </location>
    <ligand>
        <name>Zn(2+)</name>
        <dbReference type="ChEBI" id="CHEBI:29105"/>
        <note>catalytic</note>
    </ligand>
</feature>
<feature type="binding site" evidence="2">
    <location>
        <position position="124"/>
    </location>
    <ligand>
        <name>Zn(2+)</name>
        <dbReference type="ChEBI" id="CHEBI:29105"/>
        <note>catalytic</note>
    </ligand>
</feature>
<feature type="binding site" evidence="2">
    <location>
        <position position="141"/>
    </location>
    <ligand>
        <name>Zn(2+)</name>
        <dbReference type="ChEBI" id="CHEBI:29105"/>
        <note>catalytic</note>
    </ligand>
</feature>
<comment type="function">
    <text evidence="2">Purine nucleoside enzyme that catalyzes the phosphorolysis of adenosine and inosine nucleosides, yielding D-ribose 1-phosphate and the respective free bases, adenine and hypoxanthine. Also catalyzes the phosphorolysis of S-methyl-5'-thioadenosine into adenine and S-methyl-5-thio-alpha-D-ribose 1-phosphate. Also has adenosine deaminase activity.</text>
</comment>
<comment type="catalytic activity">
    <reaction evidence="2">
        <text>adenosine + phosphate = alpha-D-ribose 1-phosphate + adenine</text>
        <dbReference type="Rhea" id="RHEA:27642"/>
        <dbReference type="ChEBI" id="CHEBI:16335"/>
        <dbReference type="ChEBI" id="CHEBI:16708"/>
        <dbReference type="ChEBI" id="CHEBI:43474"/>
        <dbReference type="ChEBI" id="CHEBI:57720"/>
        <dbReference type="EC" id="2.4.2.1"/>
    </reaction>
    <physiologicalReaction direction="left-to-right" evidence="2">
        <dbReference type="Rhea" id="RHEA:27643"/>
    </physiologicalReaction>
</comment>
<comment type="catalytic activity">
    <reaction evidence="2">
        <text>S-methyl-5'-thioadenosine + phosphate = 5-(methylsulfanyl)-alpha-D-ribose 1-phosphate + adenine</text>
        <dbReference type="Rhea" id="RHEA:11852"/>
        <dbReference type="ChEBI" id="CHEBI:16708"/>
        <dbReference type="ChEBI" id="CHEBI:17509"/>
        <dbReference type="ChEBI" id="CHEBI:43474"/>
        <dbReference type="ChEBI" id="CHEBI:58533"/>
        <dbReference type="EC" id="2.4.2.28"/>
    </reaction>
    <physiologicalReaction direction="left-to-right" evidence="2">
        <dbReference type="Rhea" id="RHEA:11853"/>
    </physiologicalReaction>
</comment>
<comment type="catalytic activity">
    <reaction evidence="2">
        <text>inosine + phosphate = alpha-D-ribose 1-phosphate + hypoxanthine</text>
        <dbReference type="Rhea" id="RHEA:27646"/>
        <dbReference type="ChEBI" id="CHEBI:17368"/>
        <dbReference type="ChEBI" id="CHEBI:17596"/>
        <dbReference type="ChEBI" id="CHEBI:43474"/>
        <dbReference type="ChEBI" id="CHEBI:57720"/>
        <dbReference type="EC" id="2.4.2.1"/>
    </reaction>
    <physiologicalReaction direction="left-to-right" evidence="2">
        <dbReference type="Rhea" id="RHEA:27647"/>
    </physiologicalReaction>
</comment>
<comment type="catalytic activity">
    <reaction evidence="2">
        <text>adenosine + H2O + H(+) = inosine + NH4(+)</text>
        <dbReference type="Rhea" id="RHEA:24408"/>
        <dbReference type="ChEBI" id="CHEBI:15377"/>
        <dbReference type="ChEBI" id="CHEBI:15378"/>
        <dbReference type="ChEBI" id="CHEBI:16335"/>
        <dbReference type="ChEBI" id="CHEBI:17596"/>
        <dbReference type="ChEBI" id="CHEBI:28938"/>
        <dbReference type="EC" id="3.5.4.4"/>
    </reaction>
    <physiologicalReaction direction="left-to-right" evidence="2">
        <dbReference type="Rhea" id="RHEA:24409"/>
    </physiologicalReaction>
</comment>
<comment type="cofactor">
    <cofactor evidence="1">
        <name>Cu(2+)</name>
        <dbReference type="ChEBI" id="CHEBI:29036"/>
    </cofactor>
    <cofactor evidence="2">
        <name>Zn(2+)</name>
        <dbReference type="ChEBI" id="CHEBI:29105"/>
    </cofactor>
</comment>
<comment type="subunit">
    <text evidence="3">Homodimer.</text>
</comment>
<comment type="similarity">
    <text evidence="4">Belongs to the purine nucleoside phosphorylase YfiH/LACC1 family.</text>
</comment>
<proteinExistence type="inferred from homology"/>
<organism>
    <name type="scientific">Staphylococcus aureus</name>
    <dbReference type="NCBI Taxonomy" id="1280"/>
    <lineage>
        <taxon>Bacteria</taxon>
        <taxon>Bacillati</taxon>
        <taxon>Bacillota</taxon>
        <taxon>Bacilli</taxon>
        <taxon>Bacillales</taxon>
        <taxon>Staphylococcaceae</taxon>
        <taxon>Staphylococcus</taxon>
    </lineage>
</organism>
<protein>
    <recommendedName>
        <fullName>Purine nucleoside phosphorylase YlmD</fullName>
        <ecNumber evidence="2">2.4.2.1</ecNumber>
    </recommendedName>
    <alternativeName>
        <fullName>Adenosine deaminase YlmD</fullName>
        <ecNumber evidence="2">3.5.4.4</ecNumber>
    </alternativeName>
    <alternativeName>
        <fullName>S-methyl-5'-thioadenosine phosphorylase YlmD</fullName>
        <ecNumber evidence="2">2.4.2.28</ecNumber>
    </alternativeName>
</protein>
<name>PURNU_STAAU</name>
<dbReference type="EC" id="2.4.2.1" evidence="2"/>
<dbReference type="EC" id="3.5.4.4" evidence="2"/>
<dbReference type="EC" id="2.4.2.28" evidence="2"/>
<dbReference type="EMBL" id="AF068904">
    <property type="protein sequence ID" value="AAC95459.1"/>
    <property type="molecule type" value="Genomic_DNA"/>
</dbReference>
<dbReference type="SMR" id="Q9ZHA4"/>
<dbReference type="OMA" id="GWKGALT"/>
<dbReference type="GO" id="GO:0004000">
    <property type="term" value="F:adenosine deaminase activity"/>
    <property type="evidence" value="ECO:0007669"/>
    <property type="project" value="RHEA"/>
</dbReference>
<dbReference type="GO" id="GO:0005507">
    <property type="term" value="F:copper ion binding"/>
    <property type="evidence" value="ECO:0007669"/>
    <property type="project" value="TreeGrafter"/>
</dbReference>
<dbReference type="GO" id="GO:0016491">
    <property type="term" value="F:oxidoreductase activity"/>
    <property type="evidence" value="ECO:0007669"/>
    <property type="project" value="UniProtKB-KW"/>
</dbReference>
<dbReference type="GO" id="GO:0017061">
    <property type="term" value="F:S-methyl-5-thioadenosine phosphorylase activity"/>
    <property type="evidence" value="ECO:0007669"/>
    <property type="project" value="UniProtKB-EC"/>
</dbReference>
<dbReference type="CDD" id="cd16833">
    <property type="entry name" value="YfiH"/>
    <property type="match status" value="1"/>
</dbReference>
<dbReference type="Gene3D" id="3.60.140.10">
    <property type="entry name" value="CNF1/YfiH-like putative cysteine hydrolases"/>
    <property type="match status" value="1"/>
</dbReference>
<dbReference type="InterPro" id="IPR003730">
    <property type="entry name" value="Cu_polyphenol_OxRdtase"/>
</dbReference>
<dbReference type="InterPro" id="IPR038371">
    <property type="entry name" value="Cu_polyphenol_OxRdtase_sf"/>
</dbReference>
<dbReference type="InterPro" id="IPR011324">
    <property type="entry name" value="Cytotoxic_necrot_fac-like_cat"/>
</dbReference>
<dbReference type="NCBIfam" id="TIGR00726">
    <property type="entry name" value="peptidoglycan editing factor PgeF"/>
    <property type="match status" value="1"/>
</dbReference>
<dbReference type="PANTHER" id="PTHR30616:SF2">
    <property type="entry name" value="PURINE NUCLEOSIDE PHOSPHORYLASE LACC1"/>
    <property type="match status" value="1"/>
</dbReference>
<dbReference type="PANTHER" id="PTHR30616">
    <property type="entry name" value="UNCHARACTERIZED PROTEIN YFIH"/>
    <property type="match status" value="1"/>
</dbReference>
<dbReference type="Pfam" id="PF02578">
    <property type="entry name" value="Cu-oxidase_4"/>
    <property type="match status" value="1"/>
</dbReference>
<dbReference type="SUPFAM" id="SSF64438">
    <property type="entry name" value="CNF1/YfiH-like putative cysteine hydrolases"/>
    <property type="match status" value="1"/>
</dbReference>